<accession>A0A0N6WJC7</accession>
<protein>
    <recommendedName>
        <fullName evidence="3">Dehydrocurvularin biosynthesis regulator</fullName>
    </recommendedName>
    <alternativeName>
        <fullName evidence="3">Dehydrocurvularin biosynthesis protein 4</fullName>
    </alternativeName>
</protein>
<proteinExistence type="evidence at transcript level"/>
<organism>
    <name type="scientific">Alternaria cinerariae</name>
    <dbReference type="NCBI Taxonomy" id="216837"/>
    <lineage>
        <taxon>Eukaryota</taxon>
        <taxon>Fungi</taxon>
        <taxon>Dikarya</taxon>
        <taxon>Ascomycota</taxon>
        <taxon>Pezizomycotina</taxon>
        <taxon>Dothideomycetes</taxon>
        <taxon>Pleosporomycetidae</taxon>
        <taxon>Pleosporales</taxon>
        <taxon>Pleosporineae</taxon>
        <taxon>Pleosporaceae</taxon>
        <taxon>Alternaria</taxon>
        <taxon>Alternaria sect. Sonchi</taxon>
    </lineage>
</organism>
<gene>
    <name evidence="3" type="primary">Dhc4</name>
</gene>
<sequence length="764" mass="85533">MSSPRAAPSHDTFPNAKRRKVRKGTHSCWECKRRKMKCIFDPRITSTSCNGCRQRGSPCISQEFVQDDSHVAHGANDSASLDASTPIATPSDDARRADHDILTPVSVDSEPYRYLPSSKSSDKRFTTRSSNDASTCPMKHEKLSKYLHEALPSREDTERICKASRHSSILAHELLTVPYDTLYRNGLKTPDSLLAIPEPHVHPVLIAKHMLQLATFLQHLHPDLDKEIKVLSESPRAIMQRLVDIAIHHITTNNELLGSVESLECVMIESLYQANIGNLRKSWVAGRRAMSIAQLMGLHRSDSLSQYKVLDPKTEYNPQLMWLRIVTLDRHLCLLLGLPQGCTDRSMASETCLSNDTQMGRLERLHCVLMSRILERNEYSTNAQHAVVTREIDLELQKAARGLTSKWWLAPKLNTASADLQVHFWDTRRLLAQIFHYNLLIQLHLPYMLRVSSDESKHDYSRMTCVNASREVLSRYITLRNLNRIAYSCRTVDFIALMAAMALLLAHMNCHRAGAVNPLAHQYLSDRAMIEQVQENMHEINKLNSDALSAQSADLLKKLLAIEMEAGDTRVSVSEASNGVVQQDGTTREEDGVVSVQVPYFGIIRIGKDTPTKNQASVTATMHGTAPLHLDRFPTSINTNSDPVHVHSQADFPSSTQLSSSSHPNTPSPALSLNNIPFHATCMAALPDSSVVFTRQQHQKQQQEHQEFGGDLATVSDTSFPSSLHATWQDNFPELAAGSEDWAFQGVDMAFFESIMRSDTNLGQ</sequence>
<reference key="1">
    <citation type="journal article" date="2015" name="ChemBioChem">
        <title>Comparison of 10,11-dehydrocurvularin polyketide synthases from Alternaria cinerariae and Aspergillus terreus highlights key structural motifs.</title>
        <authorList>
            <person name="Cochrane R.V."/>
            <person name="Gao Z."/>
            <person name="Lambkin G.R."/>
            <person name="Xu W."/>
            <person name="Winter J.M."/>
            <person name="Marcus S.L."/>
            <person name="Tang Y."/>
            <person name="Vederas J.C."/>
        </authorList>
    </citation>
    <scope>NUCLEOTIDE SEQUENCE [MRNA]</scope>
    <scope>FUNCTION</scope>
    <source>
        <strain>ATCC 11784</strain>
    </source>
</reference>
<reference key="2">
    <citation type="submission" date="2015-07" db="EMBL/GenBank/DDBJ databases">
        <authorList>
            <person name="Cajimat M.N.B."/>
            <person name="Milazzo M.L."/>
            <person name="Fulhorst C.F."/>
        </authorList>
    </citation>
    <scope>NUCLEOTIDE SEQUENCE [MRNA]</scope>
    <source>
        <strain>ATCC 11784</strain>
    </source>
</reference>
<name>DHC4_ALTCI</name>
<keyword id="KW-0238">DNA-binding</keyword>
<keyword id="KW-0479">Metal-binding</keyword>
<keyword id="KW-0539">Nucleus</keyword>
<keyword id="KW-0804">Transcription</keyword>
<keyword id="KW-0805">Transcription regulation</keyword>
<keyword id="KW-0862">Zinc</keyword>
<dbReference type="EMBL" id="KT271473">
    <property type="protein sequence ID" value="AKQ49202.1"/>
    <property type="molecule type" value="mRNA"/>
</dbReference>
<dbReference type="GO" id="GO:0005634">
    <property type="term" value="C:nucleus"/>
    <property type="evidence" value="ECO:0007669"/>
    <property type="project" value="UniProtKB-SubCell"/>
</dbReference>
<dbReference type="GO" id="GO:0003677">
    <property type="term" value="F:DNA binding"/>
    <property type="evidence" value="ECO:0007669"/>
    <property type="project" value="UniProtKB-KW"/>
</dbReference>
<dbReference type="GO" id="GO:0000981">
    <property type="term" value="F:DNA-binding transcription factor activity, RNA polymerase II-specific"/>
    <property type="evidence" value="ECO:0007669"/>
    <property type="project" value="InterPro"/>
</dbReference>
<dbReference type="GO" id="GO:0008270">
    <property type="term" value="F:zinc ion binding"/>
    <property type="evidence" value="ECO:0007669"/>
    <property type="project" value="InterPro"/>
</dbReference>
<dbReference type="GO" id="GO:0006351">
    <property type="term" value="P:DNA-templated transcription"/>
    <property type="evidence" value="ECO:0007669"/>
    <property type="project" value="InterPro"/>
</dbReference>
<dbReference type="CDD" id="cd12148">
    <property type="entry name" value="fungal_TF_MHR"/>
    <property type="match status" value="1"/>
</dbReference>
<dbReference type="CDD" id="cd00067">
    <property type="entry name" value="GAL4"/>
    <property type="match status" value="1"/>
</dbReference>
<dbReference type="Gene3D" id="4.10.240.10">
    <property type="entry name" value="Zn(2)-C6 fungal-type DNA-binding domain"/>
    <property type="match status" value="1"/>
</dbReference>
<dbReference type="InterPro" id="IPR007219">
    <property type="entry name" value="Transcription_factor_dom_fun"/>
</dbReference>
<dbReference type="InterPro" id="IPR036864">
    <property type="entry name" value="Zn2-C6_fun-type_DNA-bd_sf"/>
</dbReference>
<dbReference type="InterPro" id="IPR001138">
    <property type="entry name" value="Zn2Cys6_DnaBD"/>
</dbReference>
<dbReference type="PANTHER" id="PTHR47840:SF1">
    <property type="entry name" value="ZN(II)2CYS6 TRANSCRIPTION FACTOR (EUROFUNG)"/>
    <property type="match status" value="1"/>
</dbReference>
<dbReference type="PANTHER" id="PTHR47840">
    <property type="entry name" value="ZN(II)2CYS6 TRANSCRIPTION FACTOR (EUROFUNG)-RELATED"/>
    <property type="match status" value="1"/>
</dbReference>
<dbReference type="SMART" id="SM00906">
    <property type="entry name" value="Fungal_trans"/>
    <property type="match status" value="1"/>
</dbReference>
<dbReference type="SUPFAM" id="SSF57701">
    <property type="entry name" value="Zn2/Cys6 DNA-binding domain"/>
    <property type="match status" value="1"/>
</dbReference>
<dbReference type="PROSITE" id="PS00463">
    <property type="entry name" value="ZN2_CY6_FUNGAL_1"/>
    <property type="match status" value="1"/>
</dbReference>
<feature type="chain" id="PRO_0000438393" description="Dehydrocurvularin biosynthesis regulator">
    <location>
        <begin position="1"/>
        <end position="764"/>
    </location>
</feature>
<feature type="DNA-binding region" description="Zn(2)-C6 fungal-type" evidence="1">
    <location>
        <begin position="28"/>
        <end position="59"/>
    </location>
</feature>
<feature type="region of interest" description="Disordered" evidence="2">
    <location>
        <begin position="73"/>
        <end position="94"/>
    </location>
</feature>
<feature type="region of interest" description="Disordered" evidence="2">
    <location>
        <begin position="112"/>
        <end position="136"/>
    </location>
</feature>
<feature type="region of interest" description="Disordered" evidence="2">
    <location>
        <begin position="633"/>
        <end position="672"/>
    </location>
</feature>
<feature type="compositionally biased region" description="Polar residues" evidence="2">
    <location>
        <begin position="77"/>
        <end position="88"/>
    </location>
</feature>
<feature type="compositionally biased region" description="Polar residues" evidence="2">
    <location>
        <begin position="663"/>
        <end position="672"/>
    </location>
</feature>
<comment type="function">
    <text evidence="4">Transcription factor involved in regulation of the dehydrocurvularin biosynthesis gene cluster (PubMed:26493380).</text>
</comment>
<comment type="subcellular location">
    <subcellularLocation>
        <location evidence="1">Nucleus</location>
    </subcellularLocation>
</comment>
<evidence type="ECO:0000255" key="1">
    <source>
        <dbReference type="PROSITE-ProRule" id="PRU00227"/>
    </source>
</evidence>
<evidence type="ECO:0000256" key="2">
    <source>
        <dbReference type="SAM" id="MobiDB-lite"/>
    </source>
</evidence>
<evidence type="ECO:0000303" key="3">
    <source>
    </source>
</evidence>
<evidence type="ECO:0000305" key="4">
    <source>
    </source>
</evidence>